<dbReference type="EMBL" id="AF032379">
    <property type="protein sequence ID" value="AAF21641.1"/>
    <property type="molecule type" value="mRNA"/>
</dbReference>
<dbReference type="RefSeq" id="XP_036620694.1">
    <property type="nucleotide sequence ID" value="XM_036764799.1"/>
</dbReference>
<dbReference type="SMR" id="Q9TTI8"/>
<dbReference type="GlyCosmos" id="Q9TTI8">
    <property type="glycosylation" value="3 sites, No reported glycans"/>
</dbReference>
<dbReference type="GeneID" id="118854441"/>
<dbReference type="OrthoDB" id="6022667at2759"/>
<dbReference type="GO" id="GO:0005886">
    <property type="term" value="C:plasma membrane"/>
    <property type="evidence" value="ECO:0007669"/>
    <property type="project" value="UniProtKB-SubCell"/>
</dbReference>
<dbReference type="GO" id="GO:0004930">
    <property type="term" value="F:G protein-coupled receptor activity"/>
    <property type="evidence" value="ECO:0007669"/>
    <property type="project" value="UniProtKB-KW"/>
</dbReference>
<dbReference type="GO" id="GO:0042277">
    <property type="term" value="F:peptide binding"/>
    <property type="evidence" value="ECO:0007669"/>
    <property type="project" value="TreeGrafter"/>
</dbReference>
<dbReference type="GO" id="GO:0016500">
    <property type="term" value="F:protein-hormone receptor activity"/>
    <property type="evidence" value="ECO:0007669"/>
    <property type="project" value="InterPro"/>
</dbReference>
<dbReference type="GO" id="GO:0032870">
    <property type="term" value="P:cellular response to hormone stimulus"/>
    <property type="evidence" value="ECO:0007669"/>
    <property type="project" value="TreeGrafter"/>
</dbReference>
<dbReference type="FunFam" id="1.20.1070.10:FF:000203">
    <property type="entry name" value="gonadotropin-releasing hormone receptor"/>
    <property type="match status" value="1"/>
</dbReference>
<dbReference type="Gene3D" id="1.20.1070.10">
    <property type="entry name" value="Rhodopsin 7-helix transmembrane proteins"/>
    <property type="match status" value="1"/>
</dbReference>
<dbReference type="InterPro" id="IPR000276">
    <property type="entry name" value="GPCR_Rhodpsn"/>
</dbReference>
<dbReference type="InterPro" id="IPR017452">
    <property type="entry name" value="GPCR_Rhodpsn_7TM"/>
</dbReference>
<dbReference type="InterPro" id="IPR001658">
    <property type="entry name" value="GphnRH_fam_rcpt"/>
</dbReference>
<dbReference type="PANTHER" id="PTHR24241:SF22">
    <property type="entry name" value="GONADOTROPIN-RELEASING HORMONE RECEPTOR"/>
    <property type="match status" value="1"/>
</dbReference>
<dbReference type="PANTHER" id="PTHR24241">
    <property type="entry name" value="NEUROPEPTIDE RECEPTOR-RELATED G-PROTEIN COUPLED RECEPTOR"/>
    <property type="match status" value="1"/>
</dbReference>
<dbReference type="Pfam" id="PF00001">
    <property type="entry name" value="7tm_1"/>
    <property type="match status" value="1"/>
</dbReference>
<dbReference type="PRINTS" id="PR00529">
    <property type="entry name" value="GNADOTRPHINR"/>
</dbReference>
<dbReference type="PRINTS" id="PR00237">
    <property type="entry name" value="GPCRRHODOPSN"/>
</dbReference>
<dbReference type="SUPFAM" id="SSF81321">
    <property type="entry name" value="Family A G protein-coupled receptor-like"/>
    <property type="match status" value="1"/>
</dbReference>
<dbReference type="PROSITE" id="PS00237">
    <property type="entry name" value="G_PROTEIN_RECEP_F1_1"/>
    <property type="match status" value="1"/>
</dbReference>
<dbReference type="PROSITE" id="PS50262">
    <property type="entry name" value="G_PROTEIN_RECEP_F1_2"/>
    <property type="match status" value="1"/>
</dbReference>
<protein>
    <recommendedName>
        <fullName>Gonadotropin-releasing hormone receptor</fullName>
        <shortName>GnRH receptor</shortName>
        <shortName>GnRH-R</shortName>
    </recommendedName>
</protein>
<feature type="chain" id="PRO_0000069493" description="Gonadotropin-releasing hormone receptor">
    <location>
        <begin position="1"/>
        <end position="328"/>
    </location>
</feature>
<feature type="topological domain" description="Extracellular" evidence="2">
    <location>
        <begin position="1"/>
        <end position="38"/>
    </location>
</feature>
<feature type="transmembrane region" description="Helical; Name=1" evidence="2">
    <location>
        <begin position="39"/>
        <end position="58"/>
    </location>
</feature>
<feature type="topological domain" description="Cytoplasmic" evidence="2">
    <location>
        <begin position="59"/>
        <end position="77"/>
    </location>
</feature>
<feature type="transmembrane region" description="Helical; Name=2" evidence="2">
    <location>
        <begin position="78"/>
        <end position="97"/>
    </location>
</feature>
<feature type="topological domain" description="Extracellular" evidence="2">
    <location>
        <begin position="98"/>
        <end position="115"/>
    </location>
</feature>
<feature type="transmembrane region" description="Helical; Name=3" evidence="2">
    <location>
        <begin position="116"/>
        <end position="137"/>
    </location>
</feature>
<feature type="topological domain" description="Cytoplasmic" evidence="2">
    <location>
        <begin position="138"/>
        <end position="164"/>
    </location>
</feature>
<feature type="transmembrane region" description="Helical; Name=4" evidence="2">
    <location>
        <begin position="165"/>
        <end position="184"/>
    </location>
</feature>
<feature type="topological domain" description="Extracellular" evidence="2">
    <location>
        <begin position="185"/>
        <end position="212"/>
    </location>
</feature>
<feature type="transmembrane region" description="Helical; Name=5" evidence="2">
    <location>
        <begin position="213"/>
        <end position="232"/>
    </location>
</feature>
<feature type="topological domain" description="Cytoplasmic" evidence="2">
    <location>
        <begin position="233"/>
        <end position="281"/>
    </location>
</feature>
<feature type="transmembrane region" description="Helical; Name=6" evidence="2">
    <location>
        <begin position="282"/>
        <end position="300"/>
    </location>
</feature>
<feature type="topological domain" description="Extracellular" evidence="2">
    <location>
        <begin position="301"/>
        <end position="306"/>
    </location>
</feature>
<feature type="transmembrane region" description="Helical; Name=7" evidence="2">
    <location>
        <begin position="307"/>
        <end position="326"/>
    </location>
</feature>
<feature type="topological domain" description="Cytoplasmic" evidence="2">
    <location>
        <begin position="327"/>
        <end position="328"/>
    </location>
</feature>
<feature type="glycosylation site" description="N-linked (GlcNAc...) asparagine" evidence="2">
    <location>
        <position position="18"/>
    </location>
</feature>
<feature type="glycosylation site" description="N-linked (GlcNAc...) asparagine" evidence="2">
    <location>
        <position position="102"/>
    </location>
</feature>
<feature type="glycosylation site" description="N-linked (GlcNAc...) asparagine" evidence="2">
    <location>
        <position position="192"/>
    </location>
</feature>
<feature type="disulfide bond" evidence="3">
    <location>
        <begin position="114"/>
        <end position="196"/>
    </location>
</feature>
<name>GNRHR_TRIVU</name>
<keyword id="KW-1003">Cell membrane</keyword>
<keyword id="KW-1015">Disulfide bond</keyword>
<keyword id="KW-0297">G-protein coupled receptor</keyword>
<keyword id="KW-0325">Glycoprotein</keyword>
<keyword id="KW-0472">Membrane</keyword>
<keyword id="KW-0675">Receptor</keyword>
<keyword id="KW-0807">Transducer</keyword>
<keyword id="KW-0812">Transmembrane</keyword>
<keyword id="KW-1133">Transmembrane helix</keyword>
<evidence type="ECO:0000250" key="1"/>
<evidence type="ECO:0000255" key="2"/>
<evidence type="ECO:0000255" key="3">
    <source>
        <dbReference type="PROSITE-ProRule" id="PRU00521"/>
    </source>
</evidence>
<reference key="1">
    <citation type="submission" date="1997-11" db="EMBL/GenBank/DDBJ databases">
        <authorList>
            <person name="Lawrence S.B."/>
            <person name="McNatty K.P."/>
            <person name="Fidler A.E."/>
        </authorList>
    </citation>
    <scope>NUCLEOTIDE SEQUENCE [MRNA]</scope>
</reference>
<gene>
    <name type="primary">GNRHR</name>
</gene>
<proteinExistence type="evidence at transcript level"/>
<organism>
    <name type="scientific">Trichosurus vulpecula</name>
    <name type="common">Brush-tailed possum</name>
    <dbReference type="NCBI Taxonomy" id="9337"/>
    <lineage>
        <taxon>Eukaryota</taxon>
        <taxon>Metazoa</taxon>
        <taxon>Chordata</taxon>
        <taxon>Craniata</taxon>
        <taxon>Vertebrata</taxon>
        <taxon>Euteleostomi</taxon>
        <taxon>Mammalia</taxon>
        <taxon>Metatheria</taxon>
        <taxon>Diprotodontia</taxon>
        <taxon>Phalangeridae</taxon>
        <taxon>Trichosurus</taxon>
    </lineage>
</organism>
<sequence length="328" mass="37986">MANRAYLEQKQTQCSIINSSFSMTHRDLPTLTLSGKIRVMVTFFLFLVSTAFNASFLMKLQRQTQKKEEVKKLTRMKVLLKHLTLANLLETVIVMPLDGIWNVTVQWYAGEFLCKALSYLKLFSMYAPAFMMVVISLDRFLAITRPLAVKSNTKVGQSLIAVAWFLSIVLAGPQLYIFRMIYVEDISGQTGNFSQCVTHCSFPEWWQEAFYNLLTFSCLFIGPLLIMLVCNAKIIFTLTQVLHQDPHELQLNRSKNNIPRARLRTLKMTVAFATLFTICWTPYYVLGIWYWFDPEMLNRVSDPVNHFFFLFGLLNPCFDPLIYGYFSL</sequence>
<comment type="function">
    <text evidence="1">Receptor for gonadotropin releasing hormone (GnRH) that mediates the action of GnRH to stimulate the secretion of the gonadotropic hormones luteinizing hormone (LH) and follicle-stimulating hormone (FSH). This receptor mediates its action by association with G-proteins that activate a phosphatidylinositol-calcium second messenger system (By similarity).</text>
</comment>
<comment type="subcellular location">
    <subcellularLocation>
        <location>Cell membrane</location>
        <topology>Multi-pass membrane protein</topology>
    </subcellularLocation>
</comment>
<comment type="similarity">
    <text evidence="3">Belongs to the G-protein coupled receptor 1 family.</text>
</comment>
<accession>Q9TTI8</accession>